<accession>O22707</accession>
<protein>
    <recommendedName>
        <fullName>Probable aldo-keto reductase 3</fullName>
        <ecNumber>1.1.1.-</ecNumber>
    </recommendedName>
</protein>
<evidence type="ECO:0000250" key="1"/>
<evidence type="ECO:0000305" key="2"/>
<gene>
    <name type="ordered locus">At1g60690</name>
    <name type="ORF">F8A5.21</name>
</gene>
<feature type="chain" id="PRO_0000415742" description="Probable aldo-keto reductase 3">
    <location>
        <begin position="1"/>
        <end position="345"/>
    </location>
</feature>
<feature type="active site" description="Proton donor" evidence="1">
    <location>
        <position position="63"/>
    </location>
</feature>
<feature type="binding site" evidence="1">
    <location>
        <position position="130"/>
    </location>
    <ligand>
        <name>substrate</name>
    </ligand>
</feature>
<feature type="binding site" evidence="1">
    <location>
        <begin position="209"/>
        <end position="219"/>
    </location>
    <ligand>
        <name>NADP(+)</name>
        <dbReference type="ChEBI" id="CHEBI:58349"/>
    </ligand>
</feature>
<dbReference type="EC" id="1.1.1.-"/>
<dbReference type="EMBL" id="AC002292">
    <property type="protein sequence ID" value="AAB71981.1"/>
    <property type="molecule type" value="Genomic_DNA"/>
</dbReference>
<dbReference type="EMBL" id="CP002684">
    <property type="protein sequence ID" value="AEE33720.1"/>
    <property type="molecule type" value="Genomic_DNA"/>
</dbReference>
<dbReference type="PIR" id="C96632">
    <property type="entry name" value="C96632"/>
</dbReference>
<dbReference type="RefSeq" id="NP_176268.1">
    <property type="nucleotide sequence ID" value="NM_104752.2"/>
</dbReference>
<dbReference type="SMR" id="O22707"/>
<dbReference type="FunCoup" id="O22707">
    <property type="interactions" value="174"/>
</dbReference>
<dbReference type="STRING" id="3702.O22707"/>
<dbReference type="PaxDb" id="3702-AT1G60690.1"/>
<dbReference type="ProteomicsDB" id="245048"/>
<dbReference type="EnsemblPlants" id="AT1G60690.1">
    <property type="protein sequence ID" value="AT1G60690.1"/>
    <property type="gene ID" value="AT1G60690"/>
</dbReference>
<dbReference type="GeneID" id="842363"/>
<dbReference type="Gramene" id="AT1G60690.1">
    <property type="protein sequence ID" value="AT1G60690.1"/>
    <property type="gene ID" value="AT1G60690"/>
</dbReference>
<dbReference type="KEGG" id="ath:AT1G60690"/>
<dbReference type="Araport" id="AT1G60690"/>
<dbReference type="TAIR" id="AT1G60690"/>
<dbReference type="eggNOG" id="KOG1575">
    <property type="taxonomic scope" value="Eukaryota"/>
</dbReference>
<dbReference type="HOGENOM" id="CLU_023205_2_1_1"/>
<dbReference type="InParanoid" id="O22707"/>
<dbReference type="OMA" id="SKCGFNV"/>
<dbReference type="OrthoDB" id="37537at2759"/>
<dbReference type="PhylomeDB" id="O22707"/>
<dbReference type="BioCyc" id="ARA:AT1G60690-MONOMER"/>
<dbReference type="PRO" id="PR:O22707"/>
<dbReference type="Proteomes" id="UP000006548">
    <property type="component" value="Chromosome 1"/>
</dbReference>
<dbReference type="ExpressionAtlas" id="O22707">
    <property type="expression patterns" value="baseline and differential"/>
</dbReference>
<dbReference type="GO" id="GO:0009941">
    <property type="term" value="C:chloroplast envelope"/>
    <property type="evidence" value="ECO:0007005"/>
    <property type="project" value="TAIR"/>
</dbReference>
<dbReference type="GO" id="GO:0005886">
    <property type="term" value="C:plasma membrane"/>
    <property type="evidence" value="ECO:0007005"/>
    <property type="project" value="TAIR"/>
</dbReference>
<dbReference type="GO" id="GO:0016491">
    <property type="term" value="F:oxidoreductase activity"/>
    <property type="evidence" value="ECO:0007669"/>
    <property type="project" value="UniProtKB-KW"/>
</dbReference>
<dbReference type="CDD" id="cd19145">
    <property type="entry name" value="AKR_AKR13D1"/>
    <property type="match status" value="1"/>
</dbReference>
<dbReference type="FunFam" id="3.20.20.100:FF:000048">
    <property type="entry name" value="Probable aldo-keto reductase 4"/>
    <property type="match status" value="1"/>
</dbReference>
<dbReference type="Gene3D" id="3.20.20.100">
    <property type="entry name" value="NADP-dependent oxidoreductase domain"/>
    <property type="match status" value="1"/>
</dbReference>
<dbReference type="InterPro" id="IPR050791">
    <property type="entry name" value="Aldo-Keto_reductase"/>
</dbReference>
<dbReference type="InterPro" id="IPR023210">
    <property type="entry name" value="NADP_OxRdtase_dom"/>
</dbReference>
<dbReference type="InterPro" id="IPR036812">
    <property type="entry name" value="NADP_OxRdtase_dom_sf"/>
</dbReference>
<dbReference type="PANTHER" id="PTHR43625">
    <property type="entry name" value="AFLATOXIN B1 ALDEHYDE REDUCTASE"/>
    <property type="match status" value="1"/>
</dbReference>
<dbReference type="PANTHER" id="PTHR43625:SF40">
    <property type="entry name" value="ALDO-KETO REDUCTASE YAKC [NADP(+)]"/>
    <property type="match status" value="1"/>
</dbReference>
<dbReference type="Pfam" id="PF00248">
    <property type="entry name" value="Aldo_ket_red"/>
    <property type="match status" value="1"/>
</dbReference>
<dbReference type="SUPFAM" id="SSF51430">
    <property type="entry name" value="NAD(P)-linked oxidoreductase"/>
    <property type="match status" value="1"/>
</dbReference>
<name>ALKR3_ARATH</name>
<sequence>MAESCRVRRIKLGSQGLEVSAQGLGCMGLTGHYGASKPETEAIALIHHAIHSGVTFLDTSDMYGPETNEILLGKALKDGVREKVELATKFGISYAEGNREIKGDPAYVRAACEASLKRLDVTCIDLYYQHRIDTRVPIEITMGELKKLIEEGKIKYIGLSEASASTIRRAHTVHPITAVQLEWSLWTRDVEEEIVPTCRELGIGIVSYSPLGRGFFASGPKLVENLDNNDFRKALPRFQQENLDHNKILYEKVSAMSEKKGCTPAQLALAWVHHQGDDVCPIPGTTKIENLNQNIRALSVKLTPEEMSELETIAQPESVKGERYMATVPTFKNSDTPPLSSWNAV</sequence>
<organism>
    <name type="scientific">Arabidopsis thaliana</name>
    <name type="common">Mouse-ear cress</name>
    <dbReference type="NCBI Taxonomy" id="3702"/>
    <lineage>
        <taxon>Eukaryota</taxon>
        <taxon>Viridiplantae</taxon>
        <taxon>Streptophyta</taxon>
        <taxon>Embryophyta</taxon>
        <taxon>Tracheophyta</taxon>
        <taxon>Spermatophyta</taxon>
        <taxon>Magnoliopsida</taxon>
        <taxon>eudicotyledons</taxon>
        <taxon>Gunneridae</taxon>
        <taxon>Pentapetalae</taxon>
        <taxon>rosids</taxon>
        <taxon>malvids</taxon>
        <taxon>Brassicales</taxon>
        <taxon>Brassicaceae</taxon>
        <taxon>Camelineae</taxon>
        <taxon>Arabidopsis</taxon>
    </lineage>
</organism>
<reference key="1">
    <citation type="journal article" date="2000" name="Nature">
        <title>Sequence and analysis of chromosome 1 of the plant Arabidopsis thaliana.</title>
        <authorList>
            <person name="Theologis A."/>
            <person name="Ecker J.R."/>
            <person name="Palm C.J."/>
            <person name="Federspiel N.A."/>
            <person name="Kaul S."/>
            <person name="White O."/>
            <person name="Alonso J."/>
            <person name="Altafi H."/>
            <person name="Araujo R."/>
            <person name="Bowman C.L."/>
            <person name="Brooks S.Y."/>
            <person name="Buehler E."/>
            <person name="Chan A."/>
            <person name="Chao Q."/>
            <person name="Chen H."/>
            <person name="Cheuk R.F."/>
            <person name="Chin C.W."/>
            <person name="Chung M.K."/>
            <person name="Conn L."/>
            <person name="Conway A.B."/>
            <person name="Conway A.R."/>
            <person name="Creasy T.H."/>
            <person name="Dewar K."/>
            <person name="Dunn P."/>
            <person name="Etgu P."/>
            <person name="Feldblyum T.V."/>
            <person name="Feng J.-D."/>
            <person name="Fong B."/>
            <person name="Fujii C.Y."/>
            <person name="Gill J.E."/>
            <person name="Goldsmith A.D."/>
            <person name="Haas B."/>
            <person name="Hansen N.F."/>
            <person name="Hughes B."/>
            <person name="Huizar L."/>
            <person name="Hunter J.L."/>
            <person name="Jenkins J."/>
            <person name="Johnson-Hopson C."/>
            <person name="Khan S."/>
            <person name="Khaykin E."/>
            <person name="Kim C.J."/>
            <person name="Koo H.L."/>
            <person name="Kremenetskaia I."/>
            <person name="Kurtz D.B."/>
            <person name="Kwan A."/>
            <person name="Lam B."/>
            <person name="Langin-Hooper S."/>
            <person name="Lee A."/>
            <person name="Lee J.M."/>
            <person name="Lenz C.A."/>
            <person name="Li J.H."/>
            <person name="Li Y.-P."/>
            <person name="Lin X."/>
            <person name="Liu S.X."/>
            <person name="Liu Z.A."/>
            <person name="Luros J.S."/>
            <person name="Maiti R."/>
            <person name="Marziali A."/>
            <person name="Militscher J."/>
            <person name="Miranda M."/>
            <person name="Nguyen M."/>
            <person name="Nierman W.C."/>
            <person name="Osborne B.I."/>
            <person name="Pai G."/>
            <person name="Peterson J."/>
            <person name="Pham P.K."/>
            <person name="Rizzo M."/>
            <person name="Rooney T."/>
            <person name="Rowley D."/>
            <person name="Sakano H."/>
            <person name="Salzberg S.L."/>
            <person name="Schwartz J.R."/>
            <person name="Shinn P."/>
            <person name="Southwick A.M."/>
            <person name="Sun H."/>
            <person name="Tallon L.J."/>
            <person name="Tambunga G."/>
            <person name="Toriumi M.J."/>
            <person name="Town C.D."/>
            <person name="Utterback T."/>
            <person name="Van Aken S."/>
            <person name="Vaysberg M."/>
            <person name="Vysotskaia V.S."/>
            <person name="Walker M."/>
            <person name="Wu D."/>
            <person name="Yu G."/>
            <person name="Fraser C.M."/>
            <person name="Venter J.C."/>
            <person name="Davis R.W."/>
        </authorList>
    </citation>
    <scope>NUCLEOTIDE SEQUENCE [LARGE SCALE GENOMIC DNA]</scope>
    <source>
        <strain>cv. Columbia</strain>
    </source>
</reference>
<reference key="2">
    <citation type="journal article" date="2017" name="Plant J.">
        <title>Araport11: a complete reannotation of the Arabidopsis thaliana reference genome.</title>
        <authorList>
            <person name="Cheng C.Y."/>
            <person name="Krishnakumar V."/>
            <person name="Chan A.P."/>
            <person name="Thibaud-Nissen F."/>
            <person name="Schobel S."/>
            <person name="Town C.D."/>
        </authorList>
    </citation>
    <scope>GENOME REANNOTATION</scope>
    <source>
        <strain>cv. Columbia</strain>
    </source>
</reference>
<comment type="similarity">
    <text evidence="2">Belongs to the aldo/keto reductase family.</text>
</comment>
<keyword id="KW-0521">NADP</keyword>
<keyword id="KW-0560">Oxidoreductase</keyword>
<keyword id="KW-1185">Reference proteome</keyword>
<proteinExistence type="inferred from homology"/>